<protein>
    <recommendedName>
        <fullName evidence="1">3-dehydroquinate dehydratase</fullName>
        <shortName evidence="1">3-dehydroquinase</shortName>
        <ecNumber evidence="1">4.2.1.10</ecNumber>
    </recommendedName>
    <alternativeName>
        <fullName evidence="1">Type II DHQase</fullName>
    </alternativeName>
</protein>
<dbReference type="EC" id="4.2.1.10" evidence="1"/>
<dbReference type="EMBL" id="CU207211">
    <property type="protein sequence ID" value="CAL62878.1"/>
    <property type="molecule type" value="Genomic_DNA"/>
</dbReference>
<dbReference type="SMR" id="A4G8P1"/>
<dbReference type="STRING" id="204773.HEAR2761"/>
<dbReference type="KEGG" id="har:HEAR2761"/>
<dbReference type="eggNOG" id="COG0757">
    <property type="taxonomic scope" value="Bacteria"/>
</dbReference>
<dbReference type="HOGENOM" id="CLU_090968_1_0_4"/>
<dbReference type="OrthoDB" id="9790793at2"/>
<dbReference type="UniPathway" id="UPA00053">
    <property type="reaction ID" value="UER00086"/>
</dbReference>
<dbReference type="Proteomes" id="UP000006697">
    <property type="component" value="Chromosome"/>
</dbReference>
<dbReference type="GO" id="GO:0003855">
    <property type="term" value="F:3-dehydroquinate dehydratase activity"/>
    <property type="evidence" value="ECO:0007669"/>
    <property type="project" value="UniProtKB-UniRule"/>
</dbReference>
<dbReference type="GO" id="GO:0008652">
    <property type="term" value="P:amino acid biosynthetic process"/>
    <property type="evidence" value="ECO:0007669"/>
    <property type="project" value="UniProtKB-KW"/>
</dbReference>
<dbReference type="GO" id="GO:0009073">
    <property type="term" value="P:aromatic amino acid family biosynthetic process"/>
    <property type="evidence" value="ECO:0007669"/>
    <property type="project" value="UniProtKB-KW"/>
</dbReference>
<dbReference type="GO" id="GO:0009423">
    <property type="term" value="P:chorismate biosynthetic process"/>
    <property type="evidence" value="ECO:0007669"/>
    <property type="project" value="UniProtKB-UniRule"/>
</dbReference>
<dbReference type="GO" id="GO:0019631">
    <property type="term" value="P:quinate catabolic process"/>
    <property type="evidence" value="ECO:0007669"/>
    <property type="project" value="TreeGrafter"/>
</dbReference>
<dbReference type="CDD" id="cd00466">
    <property type="entry name" value="DHQase_II"/>
    <property type="match status" value="1"/>
</dbReference>
<dbReference type="Gene3D" id="3.40.50.9100">
    <property type="entry name" value="Dehydroquinase, class II"/>
    <property type="match status" value="1"/>
</dbReference>
<dbReference type="HAMAP" id="MF_00169">
    <property type="entry name" value="AroQ"/>
    <property type="match status" value="1"/>
</dbReference>
<dbReference type="InterPro" id="IPR001874">
    <property type="entry name" value="DHquinase_II"/>
</dbReference>
<dbReference type="InterPro" id="IPR018509">
    <property type="entry name" value="DHquinase_II_CS"/>
</dbReference>
<dbReference type="InterPro" id="IPR036441">
    <property type="entry name" value="DHquinase_II_sf"/>
</dbReference>
<dbReference type="NCBIfam" id="TIGR01088">
    <property type="entry name" value="aroQ"/>
    <property type="match status" value="1"/>
</dbReference>
<dbReference type="NCBIfam" id="NF003804">
    <property type="entry name" value="PRK05395.1-1"/>
    <property type="match status" value="1"/>
</dbReference>
<dbReference type="NCBIfam" id="NF003805">
    <property type="entry name" value="PRK05395.1-2"/>
    <property type="match status" value="1"/>
</dbReference>
<dbReference type="NCBIfam" id="NF003806">
    <property type="entry name" value="PRK05395.1-3"/>
    <property type="match status" value="1"/>
</dbReference>
<dbReference type="NCBIfam" id="NF003807">
    <property type="entry name" value="PRK05395.1-4"/>
    <property type="match status" value="1"/>
</dbReference>
<dbReference type="PANTHER" id="PTHR21272">
    <property type="entry name" value="CATABOLIC 3-DEHYDROQUINASE"/>
    <property type="match status" value="1"/>
</dbReference>
<dbReference type="PANTHER" id="PTHR21272:SF3">
    <property type="entry name" value="CATABOLIC 3-DEHYDROQUINASE"/>
    <property type="match status" value="1"/>
</dbReference>
<dbReference type="Pfam" id="PF01220">
    <property type="entry name" value="DHquinase_II"/>
    <property type="match status" value="1"/>
</dbReference>
<dbReference type="PIRSF" id="PIRSF001399">
    <property type="entry name" value="DHquinase_II"/>
    <property type="match status" value="1"/>
</dbReference>
<dbReference type="SUPFAM" id="SSF52304">
    <property type="entry name" value="Type II 3-dehydroquinate dehydratase"/>
    <property type="match status" value="1"/>
</dbReference>
<dbReference type="PROSITE" id="PS01029">
    <property type="entry name" value="DEHYDROQUINASE_II"/>
    <property type="match status" value="1"/>
</dbReference>
<keyword id="KW-0028">Amino-acid biosynthesis</keyword>
<keyword id="KW-0057">Aromatic amino acid biosynthesis</keyword>
<keyword id="KW-0456">Lyase</keyword>
<keyword id="KW-1185">Reference proteome</keyword>
<sequence length="145" mass="15286">MAKNILLLNGPNLNMLGSREPEVYGSATLADVERAATEQASQAGAKLTAFQSNHEGVLIDRIQAAKKEGVDAIIINPGGLTHSSVSLRDALASVALPFVEVHVSNIHQREAFRHHSYLSGIAVGVICGLGIDGYTAAISFALKKL</sequence>
<comment type="function">
    <text evidence="1">Catalyzes a trans-dehydration via an enolate intermediate.</text>
</comment>
<comment type="catalytic activity">
    <reaction evidence="1">
        <text>3-dehydroquinate = 3-dehydroshikimate + H2O</text>
        <dbReference type="Rhea" id="RHEA:21096"/>
        <dbReference type="ChEBI" id="CHEBI:15377"/>
        <dbReference type="ChEBI" id="CHEBI:16630"/>
        <dbReference type="ChEBI" id="CHEBI:32364"/>
        <dbReference type="EC" id="4.2.1.10"/>
    </reaction>
</comment>
<comment type="pathway">
    <text evidence="1">Metabolic intermediate biosynthesis; chorismate biosynthesis; chorismate from D-erythrose 4-phosphate and phosphoenolpyruvate: step 3/7.</text>
</comment>
<comment type="subunit">
    <text evidence="1">Homododecamer.</text>
</comment>
<comment type="similarity">
    <text evidence="1">Belongs to the type-II 3-dehydroquinase family.</text>
</comment>
<accession>A4G8P1</accession>
<reference key="1">
    <citation type="journal article" date="2007" name="PLoS Genet.">
        <title>A tale of two oxidation states: bacterial colonization of arsenic-rich environments.</title>
        <authorList>
            <person name="Muller D."/>
            <person name="Medigue C."/>
            <person name="Koechler S."/>
            <person name="Barbe V."/>
            <person name="Barakat M."/>
            <person name="Talla E."/>
            <person name="Bonnefoy V."/>
            <person name="Krin E."/>
            <person name="Arsene-Ploetze F."/>
            <person name="Carapito C."/>
            <person name="Chandler M."/>
            <person name="Cournoyer B."/>
            <person name="Cruveiller S."/>
            <person name="Dossat C."/>
            <person name="Duval S."/>
            <person name="Heymann M."/>
            <person name="Leize E."/>
            <person name="Lieutaud A."/>
            <person name="Lievremont D."/>
            <person name="Makita Y."/>
            <person name="Mangenot S."/>
            <person name="Nitschke W."/>
            <person name="Ortet P."/>
            <person name="Perdrial N."/>
            <person name="Schoepp B."/>
            <person name="Siguier P."/>
            <person name="Simeonova D.D."/>
            <person name="Rouy Z."/>
            <person name="Segurens B."/>
            <person name="Turlin E."/>
            <person name="Vallenet D."/>
            <person name="van Dorsselaer A."/>
            <person name="Weiss S."/>
            <person name="Weissenbach J."/>
            <person name="Lett M.-C."/>
            <person name="Danchin A."/>
            <person name="Bertin P.N."/>
        </authorList>
    </citation>
    <scope>NUCLEOTIDE SEQUENCE [LARGE SCALE GENOMIC DNA]</scope>
    <source>
        <strain>ULPAs1</strain>
    </source>
</reference>
<name>AROQ_HERAR</name>
<feature type="chain" id="PRO_1000023476" description="3-dehydroquinate dehydratase">
    <location>
        <begin position="1"/>
        <end position="145"/>
    </location>
</feature>
<feature type="active site" description="Proton acceptor" evidence="1">
    <location>
        <position position="24"/>
    </location>
</feature>
<feature type="active site" description="Proton donor" evidence="1">
    <location>
        <position position="102"/>
    </location>
</feature>
<feature type="binding site" evidence="1">
    <location>
        <position position="76"/>
    </location>
    <ligand>
        <name>substrate</name>
    </ligand>
</feature>
<feature type="binding site" evidence="1">
    <location>
        <position position="82"/>
    </location>
    <ligand>
        <name>substrate</name>
    </ligand>
</feature>
<feature type="binding site" evidence="1">
    <location>
        <position position="89"/>
    </location>
    <ligand>
        <name>substrate</name>
    </ligand>
</feature>
<feature type="binding site" evidence="1">
    <location>
        <begin position="103"/>
        <end position="104"/>
    </location>
    <ligand>
        <name>substrate</name>
    </ligand>
</feature>
<feature type="binding site" evidence="1">
    <location>
        <position position="113"/>
    </location>
    <ligand>
        <name>substrate</name>
    </ligand>
</feature>
<feature type="site" description="Transition state stabilizer" evidence="1">
    <location>
        <position position="19"/>
    </location>
</feature>
<evidence type="ECO:0000255" key="1">
    <source>
        <dbReference type="HAMAP-Rule" id="MF_00169"/>
    </source>
</evidence>
<proteinExistence type="inferred from homology"/>
<gene>
    <name evidence="1" type="primary">aroQ</name>
    <name type="ordered locus">HEAR2761</name>
</gene>
<organism>
    <name type="scientific">Herminiimonas arsenicoxydans</name>
    <dbReference type="NCBI Taxonomy" id="204773"/>
    <lineage>
        <taxon>Bacteria</taxon>
        <taxon>Pseudomonadati</taxon>
        <taxon>Pseudomonadota</taxon>
        <taxon>Betaproteobacteria</taxon>
        <taxon>Burkholderiales</taxon>
        <taxon>Oxalobacteraceae</taxon>
        <taxon>Herminiimonas</taxon>
    </lineage>
</organism>